<accession>Q8PBV4</accession>
<dbReference type="EC" id="3.6.1.-" evidence="1"/>
<dbReference type="EMBL" id="AE008922">
    <property type="protein sequence ID" value="AAM40313.1"/>
    <property type="molecule type" value="Genomic_DNA"/>
</dbReference>
<dbReference type="RefSeq" id="NP_636389.1">
    <property type="nucleotide sequence ID" value="NC_003902.1"/>
</dbReference>
<dbReference type="RefSeq" id="WP_011036216.1">
    <property type="nucleotide sequence ID" value="NC_003902.1"/>
</dbReference>
<dbReference type="SMR" id="Q8PBV4"/>
<dbReference type="STRING" id="190485.XCC1013"/>
<dbReference type="EnsemblBacteria" id="AAM40313">
    <property type="protein sequence ID" value="AAM40313"/>
    <property type="gene ID" value="XCC1013"/>
</dbReference>
<dbReference type="KEGG" id="xcc:XCC1013"/>
<dbReference type="PATRIC" id="fig|190485.4.peg.1078"/>
<dbReference type="eggNOG" id="COG0424">
    <property type="taxonomic scope" value="Bacteria"/>
</dbReference>
<dbReference type="HOGENOM" id="CLU_040416_1_0_6"/>
<dbReference type="OrthoDB" id="9813694at2"/>
<dbReference type="Proteomes" id="UP000001010">
    <property type="component" value="Chromosome"/>
</dbReference>
<dbReference type="GO" id="GO:0005737">
    <property type="term" value="C:cytoplasm"/>
    <property type="evidence" value="ECO:0007669"/>
    <property type="project" value="UniProtKB-SubCell"/>
</dbReference>
<dbReference type="GO" id="GO:0047429">
    <property type="term" value="F:nucleoside triphosphate diphosphatase activity"/>
    <property type="evidence" value="ECO:0000318"/>
    <property type="project" value="GO_Central"/>
</dbReference>
<dbReference type="GO" id="GO:0009117">
    <property type="term" value="P:nucleotide metabolic process"/>
    <property type="evidence" value="ECO:0007669"/>
    <property type="project" value="UniProtKB-KW"/>
</dbReference>
<dbReference type="CDD" id="cd00555">
    <property type="entry name" value="Maf"/>
    <property type="match status" value="1"/>
</dbReference>
<dbReference type="FunFam" id="3.90.950.10:FF:000005">
    <property type="entry name" value="7-methyl-GTP pyrophosphatase"/>
    <property type="match status" value="1"/>
</dbReference>
<dbReference type="Gene3D" id="3.90.950.10">
    <property type="match status" value="1"/>
</dbReference>
<dbReference type="HAMAP" id="MF_00528">
    <property type="entry name" value="Maf"/>
    <property type="match status" value="1"/>
</dbReference>
<dbReference type="InterPro" id="IPR029001">
    <property type="entry name" value="ITPase-like_fam"/>
</dbReference>
<dbReference type="InterPro" id="IPR003697">
    <property type="entry name" value="Maf-like"/>
</dbReference>
<dbReference type="NCBIfam" id="TIGR00172">
    <property type="entry name" value="maf"/>
    <property type="match status" value="1"/>
</dbReference>
<dbReference type="PANTHER" id="PTHR43213:SF10">
    <property type="entry name" value="7-METHYL-GTP PYROPHOSPHATASE"/>
    <property type="match status" value="1"/>
</dbReference>
<dbReference type="PANTHER" id="PTHR43213">
    <property type="entry name" value="BIFUNCTIONAL DTTP/UTP PYROPHOSPHATASE/METHYLTRANSFERASE PROTEIN-RELATED"/>
    <property type="match status" value="1"/>
</dbReference>
<dbReference type="Pfam" id="PF02545">
    <property type="entry name" value="Maf"/>
    <property type="match status" value="1"/>
</dbReference>
<dbReference type="PIRSF" id="PIRSF006305">
    <property type="entry name" value="Maf"/>
    <property type="match status" value="1"/>
</dbReference>
<dbReference type="SUPFAM" id="SSF52972">
    <property type="entry name" value="ITPase-like"/>
    <property type="match status" value="1"/>
</dbReference>
<gene>
    <name type="ordered locus">XCC1013</name>
</gene>
<protein>
    <recommendedName>
        <fullName evidence="1">7-methyl-GTP pyrophosphatase</fullName>
        <shortName evidence="1">m(7)GTP pyrophosphatase</shortName>
        <ecNumber evidence="1">3.6.1.-</ecNumber>
    </recommendedName>
</protein>
<sequence length="192" mass="20699">MMPRLILASTSAYRRELLGRLHLDFDTARPEVDEHALPGETPQALATRLAGEKARAVAVRFPEAWVIGSDQVADLDGQALGKPGTLEQARAQLTRMSGRMVRFQTAVSLIGPDGFAAQALDLTDVQVRPLQPQEIERYLAAEPALECAGSFKCEGLGITLFDAIRSNDPTALVGLPLIAVARLLRQAGFSLP</sequence>
<keyword id="KW-0963">Cytoplasm</keyword>
<keyword id="KW-0378">Hydrolase</keyword>
<keyword id="KW-0546">Nucleotide metabolism</keyword>
<keyword id="KW-1185">Reference proteome</keyword>
<name>NTPPB_XANCP</name>
<evidence type="ECO:0000255" key="1">
    <source>
        <dbReference type="HAMAP-Rule" id="MF_00528"/>
    </source>
</evidence>
<proteinExistence type="inferred from homology"/>
<feature type="chain" id="PRO_0000123079" description="7-methyl-GTP pyrophosphatase">
    <location>
        <begin position="1"/>
        <end position="192"/>
    </location>
</feature>
<feature type="active site" description="Proton acceptor" evidence="1">
    <location>
        <position position="70"/>
    </location>
</feature>
<feature type="site" description="Important for substrate specificity" evidence="1">
    <location>
        <position position="13"/>
    </location>
</feature>
<feature type="site" description="Important for substrate specificity" evidence="1">
    <location>
        <position position="71"/>
    </location>
</feature>
<feature type="site" description="Important for substrate specificity" evidence="1">
    <location>
        <position position="154"/>
    </location>
</feature>
<reference key="1">
    <citation type="journal article" date="2002" name="Nature">
        <title>Comparison of the genomes of two Xanthomonas pathogens with differing host specificities.</title>
        <authorList>
            <person name="da Silva A.C.R."/>
            <person name="Ferro J.A."/>
            <person name="Reinach F.C."/>
            <person name="Farah C.S."/>
            <person name="Furlan L.R."/>
            <person name="Quaggio R.B."/>
            <person name="Monteiro-Vitorello C.B."/>
            <person name="Van Sluys M.A."/>
            <person name="Almeida N.F. Jr."/>
            <person name="Alves L.M.C."/>
            <person name="do Amaral A.M."/>
            <person name="Bertolini M.C."/>
            <person name="Camargo L.E.A."/>
            <person name="Camarotte G."/>
            <person name="Cannavan F."/>
            <person name="Cardozo J."/>
            <person name="Chambergo F."/>
            <person name="Ciapina L.P."/>
            <person name="Cicarelli R.M.B."/>
            <person name="Coutinho L.L."/>
            <person name="Cursino-Santos J.R."/>
            <person name="El-Dorry H."/>
            <person name="Faria J.B."/>
            <person name="Ferreira A.J.S."/>
            <person name="Ferreira R.C.C."/>
            <person name="Ferro M.I.T."/>
            <person name="Formighieri E.F."/>
            <person name="Franco M.C."/>
            <person name="Greggio C.C."/>
            <person name="Gruber A."/>
            <person name="Katsuyama A.M."/>
            <person name="Kishi L.T."/>
            <person name="Leite R.P."/>
            <person name="Lemos E.G.M."/>
            <person name="Lemos M.V.F."/>
            <person name="Locali E.C."/>
            <person name="Machado M.A."/>
            <person name="Madeira A.M.B.N."/>
            <person name="Martinez-Rossi N.M."/>
            <person name="Martins E.C."/>
            <person name="Meidanis J."/>
            <person name="Menck C.F.M."/>
            <person name="Miyaki C.Y."/>
            <person name="Moon D.H."/>
            <person name="Moreira L.M."/>
            <person name="Novo M.T.M."/>
            <person name="Okura V.K."/>
            <person name="Oliveira M.C."/>
            <person name="Oliveira V.R."/>
            <person name="Pereira H.A."/>
            <person name="Rossi A."/>
            <person name="Sena J.A.D."/>
            <person name="Silva C."/>
            <person name="de Souza R.F."/>
            <person name="Spinola L.A.F."/>
            <person name="Takita M.A."/>
            <person name="Tamura R.E."/>
            <person name="Teixeira E.C."/>
            <person name="Tezza R.I.D."/>
            <person name="Trindade dos Santos M."/>
            <person name="Truffi D."/>
            <person name="Tsai S.M."/>
            <person name="White F.F."/>
            <person name="Setubal J.C."/>
            <person name="Kitajima J.P."/>
        </authorList>
    </citation>
    <scope>NUCLEOTIDE SEQUENCE [LARGE SCALE GENOMIC DNA]</scope>
    <source>
        <strain>ATCC 33913 / DSM 3586 / NCPPB 528 / LMG 568 / P 25</strain>
    </source>
</reference>
<comment type="function">
    <text evidence="1">Nucleoside triphosphate pyrophosphatase that hydrolyzes 7-methyl-GTP (m(7)GTP). May have a dual role in cell division arrest and in preventing the incorporation of modified nucleotides into cellular nucleic acids.</text>
</comment>
<comment type="catalytic activity">
    <reaction evidence="1">
        <text>N(7)-methyl-GTP + H2O = N(7)-methyl-GMP + diphosphate + H(+)</text>
        <dbReference type="Rhea" id="RHEA:58744"/>
        <dbReference type="ChEBI" id="CHEBI:15377"/>
        <dbReference type="ChEBI" id="CHEBI:15378"/>
        <dbReference type="ChEBI" id="CHEBI:33019"/>
        <dbReference type="ChEBI" id="CHEBI:58285"/>
        <dbReference type="ChEBI" id="CHEBI:87133"/>
    </reaction>
</comment>
<comment type="cofactor">
    <cofactor evidence="1">
        <name>a divalent metal cation</name>
        <dbReference type="ChEBI" id="CHEBI:60240"/>
    </cofactor>
</comment>
<comment type="subcellular location">
    <subcellularLocation>
        <location evidence="1">Cytoplasm</location>
    </subcellularLocation>
</comment>
<comment type="similarity">
    <text evidence="1">Belongs to the Maf family. YceF subfamily.</text>
</comment>
<organism>
    <name type="scientific">Xanthomonas campestris pv. campestris (strain ATCC 33913 / DSM 3586 / NCPPB 528 / LMG 568 / P 25)</name>
    <dbReference type="NCBI Taxonomy" id="190485"/>
    <lineage>
        <taxon>Bacteria</taxon>
        <taxon>Pseudomonadati</taxon>
        <taxon>Pseudomonadota</taxon>
        <taxon>Gammaproteobacteria</taxon>
        <taxon>Lysobacterales</taxon>
        <taxon>Lysobacteraceae</taxon>
        <taxon>Xanthomonas</taxon>
    </lineage>
</organism>